<keyword id="KW-0067">ATP-binding</keyword>
<keyword id="KW-0289">Folate biosynthesis</keyword>
<keyword id="KW-0436">Ligase</keyword>
<keyword id="KW-0460">Magnesium</keyword>
<keyword id="KW-0479">Metal-binding</keyword>
<keyword id="KW-0547">Nucleotide-binding</keyword>
<keyword id="KW-0554">One-carbon metabolism</keyword>
<keyword id="KW-1185">Reference proteome</keyword>
<organism>
    <name type="scientific">Buchnera aphidicola subsp. Acyrthosiphon pisum (strain APS)</name>
    <name type="common">Acyrthosiphon pisum symbiotic bacterium</name>
    <dbReference type="NCBI Taxonomy" id="107806"/>
    <lineage>
        <taxon>Bacteria</taxon>
        <taxon>Pseudomonadati</taxon>
        <taxon>Pseudomonadota</taxon>
        <taxon>Gammaproteobacteria</taxon>
        <taxon>Enterobacterales</taxon>
        <taxon>Erwiniaceae</taxon>
        <taxon>Buchnera</taxon>
    </lineage>
</organism>
<reference key="1">
    <citation type="journal article" date="2000" name="Nature">
        <title>Genome sequence of the endocellular bacterial symbiont of aphids Buchnera sp. APS.</title>
        <authorList>
            <person name="Shigenobu S."/>
            <person name="Watanabe H."/>
            <person name="Hattori M."/>
            <person name="Sakaki Y."/>
            <person name="Ishikawa H."/>
        </authorList>
    </citation>
    <scope>NUCLEOTIDE SEQUENCE [LARGE SCALE GENOMIC DNA]</scope>
    <source>
        <strain>APS</strain>
    </source>
</reference>
<accession>P57265</accession>
<sequence>MINKNYSLSLWLKYLEQLDKKRIYNLTELKFLAKKLGLLKSESFIFTVAGTNGKGTTCAVLERLLLDSGYQVGLYTSPHLINFVERVRINGFVLHEEEHIDSFQNVELVRNGVLLTYFEFITLAALILFKRYSLDCIILKVGLGGRLDATNIIDSDISIITNIGIDHTSILGRDRISIAREKCGVFRKNKISVIGETDIPCSMYQIAKEKKTILKKIDIDWSWEKKRNYWNFFHSTIQLYNLPETQVPLSSAATALSTLYYSRFKIKEKIIRKSISNVQLPGRFQVISTFPYIIVDVAHNPNAAFYLSQKIDEINITGKIYAVVGILKDKDILGIIDPLANKIHHWFTAPLKTIRTATKHELKKFFPIHNTSILKSIEIAYKKALILVKKEDAIIIFGSFLTVSEFLSLKI</sequence>
<protein>
    <recommendedName>
        <fullName>Dihydrofolate synthase/folylpolyglutamate synthase</fullName>
        <shortName>DHFS / FPGS</shortName>
        <ecNumber>6.3.2.12</ecNumber>
        <ecNumber>6.3.2.17</ecNumber>
    </recommendedName>
    <alternativeName>
        <fullName>Folylpoly-gamma-glutamate synthetase-dihydrofolate synthetase</fullName>
    </alternativeName>
    <alternativeName>
        <fullName>Folylpolyglutamate synthetase</fullName>
    </alternativeName>
    <alternativeName>
        <fullName>Tetrahydrofolylpolyglutamate synthase</fullName>
    </alternativeName>
</protein>
<name>FOLC_BUCAI</name>
<proteinExistence type="inferred from homology"/>
<evidence type="ECO:0000250" key="1">
    <source>
        <dbReference type="UniProtKB" id="P08192"/>
    </source>
</evidence>
<evidence type="ECO:0000305" key="2"/>
<comment type="function">
    <text evidence="1">Functions in two distinct reactions of the de novo folate biosynthetic pathway. Catalyzes the addition of a glutamate residue to dihydropteroate (7,8-dihydropteroate or H2Pte) to form dihydrofolate (7,8-dihydrofolate monoglutamate or H2Pte-Glu). Also catalyzes successive additions of L-glutamate to tetrahydrofolate or 10-formyltetrahydrofolate or 5,10-methylenetetrahydrofolate, leading to folylpolyglutamate derivatives.</text>
</comment>
<comment type="catalytic activity">
    <reaction evidence="1">
        <text>7,8-dihydropteroate + L-glutamate + ATP = 7,8-dihydrofolate + ADP + phosphate + H(+)</text>
        <dbReference type="Rhea" id="RHEA:23584"/>
        <dbReference type="ChEBI" id="CHEBI:15378"/>
        <dbReference type="ChEBI" id="CHEBI:17839"/>
        <dbReference type="ChEBI" id="CHEBI:29985"/>
        <dbReference type="ChEBI" id="CHEBI:30616"/>
        <dbReference type="ChEBI" id="CHEBI:43474"/>
        <dbReference type="ChEBI" id="CHEBI:57451"/>
        <dbReference type="ChEBI" id="CHEBI:456216"/>
        <dbReference type="EC" id="6.3.2.12"/>
    </reaction>
</comment>
<comment type="catalytic activity">
    <reaction evidence="1">
        <text>(6S)-5,6,7,8-tetrahydrofolyl-(gamma-L-Glu)(n) + L-glutamate + ATP = (6S)-5,6,7,8-tetrahydrofolyl-(gamma-L-Glu)(n+1) + ADP + phosphate + H(+)</text>
        <dbReference type="Rhea" id="RHEA:10580"/>
        <dbReference type="Rhea" id="RHEA-COMP:14738"/>
        <dbReference type="Rhea" id="RHEA-COMP:14740"/>
        <dbReference type="ChEBI" id="CHEBI:15378"/>
        <dbReference type="ChEBI" id="CHEBI:29985"/>
        <dbReference type="ChEBI" id="CHEBI:30616"/>
        <dbReference type="ChEBI" id="CHEBI:43474"/>
        <dbReference type="ChEBI" id="CHEBI:141005"/>
        <dbReference type="ChEBI" id="CHEBI:456216"/>
        <dbReference type="EC" id="6.3.2.17"/>
    </reaction>
</comment>
<comment type="catalytic activity">
    <reaction evidence="1">
        <text>10-formyltetrahydrofolyl-(gamma-L-Glu)(n) + L-glutamate + ATP = 10-formyltetrahydrofolyl-(gamma-L-Glu)(n+1) + ADP + phosphate + H(+)</text>
        <dbReference type="Rhea" id="RHEA:51904"/>
        <dbReference type="Rhea" id="RHEA-COMP:13088"/>
        <dbReference type="Rhea" id="RHEA-COMP:14300"/>
        <dbReference type="ChEBI" id="CHEBI:15378"/>
        <dbReference type="ChEBI" id="CHEBI:29985"/>
        <dbReference type="ChEBI" id="CHEBI:30616"/>
        <dbReference type="ChEBI" id="CHEBI:43474"/>
        <dbReference type="ChEBI" id="CHEBI:134413"/>
        <dbReference type="ChEBI" id="CHEBI:456216"/>
        <dbReference type="EC" id="6.3.2.17"/>
    </reaction>
</comment>
<comment type="catalytic activity">
    <reaction evidence="1">
        <text>(6R)-5,10-methylenetetrahydrofolyl-(gamma-L-Glu)(n) + L-glutamate + ATP = (6R)-5,10-methylenetetrahydrofolyl-(gamma-L-Glu)(n+1) + ADP + phosphate + H(+)</text>
        <dbReference type="Rhea" id="RHEA:51912"/>
        <dbReference type="Rhea" id="RHEA-COMP:13257"/>
        <dbReference type="Rhea" id="RHEA-COMP:13258"/>
        <dbReference type="ChEBI" id="CHEBI:15378"/>
        <dbReference type="ChEBI" id="CHEBI:29985"/>
        <dbReference type="ChEBI" id="CHEBI:30616"/>
        <dbReference type="ChEBI" id="CHEBI:43474"/>
        <dbReference type="ChEBI" id="CHEBI:136572"/>
        <dbReference type="ChEBI" id="CHEBI:456216"/>
        <dbReference type="EC" id="6.3.2.17"/>
    </reaction>
</comment>
<comment type="cofactor">
    <cofactor evidence="1">
        <name>Mg(2+)</name>
        <dbReference type="ChEBI" id="CHEBI:18420"/>
    </cofactor>
    <text evidence="1">Binds 2 Mg(2+) ions per subunit.</text>
</comment>
<comment type="pathway">
    <text evidence="1">Cofactor biosynthesis; tetrahydrofolate biosynthesis; 7,8-dihydrofolate from 2-amino-4-hydroxy-6-hydroxymethyl-7,8-dihydropteridine diphosphate and 4-aminobenzoate: step 2/2.</text>
</comment>
<comment type="pathway">
    <text evidence="1">Cofactor biosynthesis; tetrahydrofolylpolyglutamate biosynthesis.</text>
</comment>
<comment type="subunit">
    <text evidence="1">Monomer.</text>
</comment>
<comment type="similarity">
    <text evidence="2">Belongs to the folylpolyglutamate synthase family.</text>
</comment>
<dbReference type="EC" id="6.3.2.12"/>
<dbReference type="EC" id="6.3.2.17"/>
<dbReference type="EMBL" id="BA000003">
    <property type="protein sequence ID" value="BAB12885.1"/>
    <property type="molecule type" value="Genomic_DNA"/>
</dbReference>
<dbReference type="RefSeq" id="NP_239999.1">
    <property type="nucleotide sequence ID" value="NC_002528.1"/>
</dbReference>
<dbReference type="RefSeq" id="WP_010895983.1">
    <property type="nucleotide sequence ID" value="NC_002528.1"/>
</dbReference>
<dbReference type="SMR" id="P57265"/>
<dbReference type="STRING" id="563178.BUAP5A_165"/>
<dbReference type="EnsemblBacteria" id="BAB12885">
    <property type="protein sequence ID" value="BAB12885"/>
    <property type="gene ID" value="BAB12885"/>
</dbReference>
<dbReference type="KEGG" id="buc:BU167"/>
<dbReference type="PATRIC" id="fig|107806.10.peg.177"/>
<dbReference type="eggNOG" id="COG0285">
    <property type="taxonomic scope" value="Bacteria"/>
</dbReference>
<dbReference type="HOGENOM" id="CLU_015869_1_0_6"/>
<dbReference type="UniPathway" id="UPA00077">
    <property type="reaction ID" value="UER00157"/>
</dbReference>
<dbReference type="UniPathway" id="UPA00850"/>
<dbReference type="Proteomes" id="UP000001806">
    <property type="component" value="Chromosome"/>
</dbReference>
<dbReference type="GO" id="GO:0005737">
    <property type="term" value="C:cytoplasm"/>
    <property type="evidence" value="ECO:0007669"/>
    <property type="project" value="TreeGrafter"/>
</dbReference>
<dbReference type="GO" id="GO:0005524">
    <property type="term" value="F:ATP binding"/>
    <property type="evidence" value="ECO:0007669"/>
    <property type="project" value="UniProtKB-KW"/>
</dbReference>
<dbReference type="GO" id="GO:0008841">
    <property type="term" value="F:dihydrofolate synthase activity"/>
    <property type="evidence" value="ECO:0007669"/>
    <property type="project" value="UniProtKB-EC"/>
</dbReference>
<dbReference type="GO" id="GO:0046872">
    <property type="term" value="F:metal ion binding"/>
    <property type="evidence" value="ECO:0007669"/>
    <property type="project" value="UniProtKB-KW"/>
</dbReference>
<dbReference type="GO" id="GO:0004326">
    <property type="term" value="F:tetrahydrofolylpolyglutamate synthase activity"/>
    <property type="evidence" value="ECO:0007669"/>
    <property type="project" value="UniProtKB-EC"/>
</dbReference>
<dbReference type="GO" id="GO:0046656">
    <property type="term" value="P:folic acid biosynthetic process"/>
    <property type="evidence" value="ECO:0007669"/>
    <property type="project" value="UniProtKB-KW"/>
</dbReference>
<dbReference type="GO" id="GO:0006730">
    <property type="term" value="P:one-carbon metabolic process"/>
    <property type="evidence" value="ECO:0007669"/>
    <property type="project" value="UniProtKB-KW"/>
</dbReference>
<dbReference type="GO" id="GO:0046654">
    <property type="term" value="P:tetrahydrofolate biosynthetic process"/>
    <property type="evidence" value="ECO:0007669"/>
    <property type="project" value="UniProtKB-UniPathway"/>
</dbReference>
<dbReference type="Gene3D" id="3.90.190.20">
    <property type="entry name" value="Mur ligase, C-terminal domain"/>
    <property type="match status" value="1"/>
</dbReference>
<dbReference type="Gene3D" id="3.40.1190.10">
    <property type="entry name" value="Mur-like, catalytic domain"/>
    <property type="match status" value="1"/>
</dbReference>
<dbReference type="InterPro" id="IPR001645">
    <property type="entry name" value="Folylpolyglutamate_synth"/>
</dbReference>
<dbReference type="InterPro" id="IPR018109">
    <property type="entry name" value="Folylpolyglutamate_synth_CS"/>
</dbReference>
<dbReference type="InterPro" id="IPR036565">
    <property type="entry name" value="Mur-like_cat_sf"/>
</dbReference>
<dbReference type="InterPro" id="IPR004101">
    <property type="entry name" value="Mur_ligase_C"/>
</dbReference>
<dbReference type="InterPro" id="IPR036615">
    <property type="entry name" value="Mur_ligase_C_dom_sf"/>
</dbReference>
<dbReference type="NCBIfam" id="TIGR01499">
    <property type="entry name" value="folC"/>
    <property type="match status" value="1"/>
</dbReference>
<dbReference type="NCBIfam" id="NF008101">
    <property type="entry name" value="PRK10846.1"/>
    <property type="match status" value="1"/>
</dbReference>
<dbReference type="PANTHER" id="PTHR11136:SF0">
    <property type="entry name" value="DIHYDROFOLATE SYNTHETASE-RELATED"/>
    <property type="match status" value="1"/>
</dbReference>
<dbReference type="PANTHER" id="PTHR11136">
    <property type="entry name" value="FOLYLPOLYGLUTAMATE SYNTHASE-RELATED"/>
    <property type="match status" value="1"/>
</dbReference>
<dbReference type="Pfam" id="PF02875">
    <property type="entry name" value="Mur_ligase_C"/>
    <property type="match status" value="1"/>
</dbReference>
<dbReference type="PIRSF" id="PIRSF001563">
    <property type="entry name" value="Folylpolyglu_synth"/>
    <property type="match status" value="1"/>
</dbReference>
<dbReference type="SUPFAM" id="SSF53623">
    <property type="entry name" value="MurD-like peptide ligases, catalytic domain"/>
    <property type="match status" value="1"/>
</dbReference>
<dbReference type="SUPFAM" id="SSF53244">
    <property type="entry name" value="MurD-like peptide ligases, peptide-binding domain"/>
    <property type="match status" value="1"/>
</dbReference>
<dbReference type="PROSITE" id="PS01011">
    <property type="entry name" value="FOLYLPOLYGLU_SYNT_1"/>
    <property type="match status" value="1"/>
</dbReference>
<dbReference type="PROSITE" id="PS01012">
    <property type="entry name" value="FOLYLPOLYGLU_SYNT_2"/>
    <property type="match status" value="1"/>
</dbReference>
<gene>
    <name type="primary">folC</name>
    <name type="ordered locus">BU167</name>
</gene>
<feature type="chain" id="PRO_0000168300" description="Dihydrofolate synthase/folylpolyglutamate synthase">
    <location>
        <begin position="1"/>
        <end position="411"/>
    </location>
</feature>
<feature type="binding site" evidence="1">
    <location>
        <begin position="53"/>
        <end position="56"/>
    </location>
    <ligand>
        <name>ATP</name>
        <dbReference type="ChEBI" id="CHEBI:30616"/>
    </ligand>
</feature>
<feature type="binding site" evidence="1">
    <location>
        <position position="77"/>
    </location>
    <ligand>
        <name>Mg(2+)</name>
        <dbReference type="ChEBI" id="CHEBI:18420"/>
        <label>1</label>
    </ligand>
</feature>
<feature type="binding site" evidence="1">
    <location>
        <begin position="116"/>
        <end position="119"/>
    </location>
    <ligand>
        <name>7,8-dihydropteroate</name>
        <dbReference type="ChEBI" id="CHEBI:17839"/>
    </ligand>
</feature>
<feature type="binding site" evidence="1">
    <location>
        <begin position="147"/>
        <end position="149"/>
    </location>
    <ligand>
        <name>7,8-dihydropteroate</name>
        <dbReference type="ChEBI" id="CHEBI:17839"/>
    </ligand>
</feature>
<feature type="binding site" evidence="1">
    <location>
        <position position="167"/>
    </location>
    <ligand>
        <name>Mg(2+)</name>
        <dbReference type="ChEBI" id="CHEBI:18420"/>
        <label>2</label>
    </ligand>
</feature>
<feature type="binding site" evidence="1">
    <location>
        <position position="283"/>
    </location>
    <ligand>
        <name>ATP</name>
        <dbReference type="ChEBI" id="CHEBI:30616"/>
    </ligand>
</feature>
<feature type="binding site" evidence="1">
    <location>
        <position position="296"/>
    </location>
    <ligand>
        <name>ATP</name>
        <dbReference type="ChEBI" id="CHEBI:30616"/>
    </ligand>
</feature>